<name>Y078_NPVOP</name>
<feature type="chain" id="PRO_0000133021" description="Uncharacterized 11.7 kDa protein">
    <location>
        <begin position="1"/>
        <end position="105"/>
    </location>
</feature>
<reference key="1">
    <citation type="journal article" date="1997" name="Virology">
        <title>The sequence of the Orgyia pseudotsugata multinucleocapsid nuclear polyhedrosis virus genome.</title>
        <authorList>
            <person name="Ahrens C.H."/>
            <person name="Russell R.R."/>
            <person name="Funk C.J."/>
            <person name="Evans J."/>
            <person name="Harwood S."/>
            <person name="Rohrmann G.F."/>
        </authorList>
    </citation>
    <scope>NUCLEOTIDE SEQUENCE [LARGE SCALE GENOMIC DNA]</scope>
</reference>
<proteinExistence type="predicted"/>
<accession>O10331</accession>
<dbReference type="EMBL" id="U75930">
    <property type="protein sequence ID" value="AAC59080.1"/>
    <property type="molecule type" value="Genomic_DNA"/>
</dbReference>
<dbReference type="RefSeq" id="NP_046237.1">
    <property type="nucleotide sequence ID" value="NC_001875.2"/>
</dbReference>
<dbReference type="SMR" id="O10331"/>
<dbReference type="KEGG" id="vg:912022"/>
<dbReference type="Proteomes" id="UP000009248">
    <property type="component" value="Genome"/>
</dbReference>
<dbReference type="InterPro" id="IPR009261">
    <property type="entry name" value="AcMNPV_AC78"/>
</dbReference>
<dbReference type="Pfam" id="PF06024">
    <property type="entry name" value="Orf78"/>
    <property type="match status" value="1"/>
</dbReference>
<gene>
    <name type="ORF">ORF81</name>
</gene>
<protein>
    <recommendedName>
        <fullName>Uncharacterized 11.7 kDa protein</fullName>
    </recommendedName>
</protein>
<sequence>MNLDVPYYRLGAHERVEYIPLKLALNDDAPPPAAHEYAEARAAGGEAAPPAEQWSAGVIVLIGLVAFVALFLLLYVIYYFVILRDQPQYSDDIDNDPPFAFNKFD</sequence>
<keyword id="KW-1185">Reference proteome</keyword>
<organism>
    <name type="scientific">Orgyia pseudotsugata multicapsid polyhedrosis virus</name>
    <name type="common">OpMNPV</name>
    <dbReference type="NCBI Taxonomy" id="262177"/>
    <lineage>
        <taxon>Viruses</taxon>
        <taxon>Viruses incertae sedis</taxon>
        <taxon>Naldaviricetes</taxon>
        <taxon>Lefavirales</taxon>
        <taxon>Baculoviridae</taxon>
        <taxon>Alphabaculovirus</taxon>
        <taxon>Alphabaculovirus orpseudotsugatae</taxon>
    </lineage>
</organism>
<organismHost>
    <name type="scientific">Orgyia pseudotsugata</name>
    <name type="common">Douglas-fir tussock moth</name>
    <dbReference type="NCBI Taxonomy" id="33414"/>
</organismHost>